<name>CSN1_CAEEL</name>
<comment type="function">
    <text evidence="3">Essential component of the COP9 signalosome complex (CSN), a complex involved in various cellular and developmental processes. The CSN complex is an essential regulator of the ubiquitin (Ubl) conjugation pathway by mediating the deneddylation of the cullin subunits of the SCF-type E3 ligase complexes, leading to decrease the Ubl ligase activity of SCF. The CSN complex plays an essential role in embryogenesis and oogenesis and is required to regulate microtubule stability in the early embryo. Mediates mei-3/katanin targeting for degradation at the meiosis to mitosis transition via deneddylation of cul-3.</text>
</comment>
<comment type="subunit">
    <text evidence="3">Component of the CSN complex, probably composed of csn-1, csn-2, csn-3, csn-4, csn-5, csn-6 and csn-7. Within the complex it probably interacts directly with csn-2, csn-4 and csn-5. May interact with itself. Interacts with rbx-1.</text>
</comment>
<comment type="interaction">
    <interactant intactId="EBI-331408">
        <id>Q9GS00</id>
    </interactant>
    <interactant intactId="EBI-331413">
        <id>O01422</id>
        <label>csn-2</label>
    </interactant>
    <organismsDiffer>false</organismsDiffer>
    <experiments>4</experiments>
</comment>
<comment type="subcellular location">
    <subcellularLocation>
        <location evidence="3">Cytoplasm</location>
    </subcellularLocation>
    <subcellularLocation>
        <location evidence="3">Nucleus</location>
    </subcellularLocation>
</comment>
<comment type="similarity">
    <text evidence="4">Belongs to the CSN1 family.</text>
</comment>
<evidence type="ECO:0000255" key="1">
    <source>
        <dbReference type="PROSITE-ProRule" id="PRU01185"/>
    </source>
</evidence>
<evidence type="ECO:0000256" key="2">
    <source>
        <dbReference type="SAM" id="MobiDB-lite"/>
    </source>
</evidence>
<evidence type="ECO:0000269" key="3">
    <source>
    </source>
</evidence>
<evidence type="ECO:0000305" key="4"/>
<proteinExistence type="evidence at protein level"/>
<organism>
    <name type="scientific">Caenorhabditis elegans</name>
    <dbReference type="NCBI Taxonomy" id="6239"/>
    <lineage>
        <taxon>Eukaryota</taxon>
        <taxon>Metazoa</taxon>
        <taxon>Ecdysozoa</taxon>
        <taxon>Nematoda</taxon>
        <taxon>Chromadorea</taxon>
        <taxon>Rhabditida</taxon>
        <taxon>Rhabditina</taxon>
        <taxon>Rhabditomorpha</taxon>
        <taxon>Rhabditoidea</taxon>
        <taxon>Rhabditidae</taxon>
        <taxon>Peloderinae</taxon>
        <taxon>Caenorhabditis</taxon>
    </lineage>
</organism>
<protein>
    <recommendedName>
        <fullName>COP9 signalosome complex subunit 1</fullName>
        <shortName>Signalosome subunit 1</shortName>
    </recommendedName>
</protein>
<sequence length="601" mass="68402">MQNELLDDPMDTGAPAAEAAAADEPLPPAHGIDREVTPKPAGNPDLMQQSLDNPAIPMHLIEKRDDRRESCDDGYSLTVNESAIDIESLACSYDSNAFFLRARFIARHCPILRADAYISLINYLKEHTTDITHYVAFFNELESELARKEFKNRQLNFQIPLRDQKWIEENGATWQSTTDQLQAEYKRHKDEGVKESTRRAMEDLFQHYMMAGKIDEAIRLYSRGIRDYCTQLKHSINMWINWMEVAICANDWGKLDTVTNTAYRSLKDADDAEKNSQQSQQAPPQRGENAPYMVERDPNAPIQTLTNRQLIETALAKCLAAQVLLKLRNKRYSQVVETILQIKTECLQSKWFVTSSDLGIYGMLSAMATMSRADLKLQVSGNGTFRKLLESEPQLIELLGSYTSSRFGRCFEIMRSVKPRLLLDPFISRNVDELFEKIRQKCVLQYLQPYSTIKMATMAEAVGMSSAELQLSLLELIEQKHVSLKIDQNEGIVRILDERDENAILKRVNVTCDRATQKAKSLLWKTTLAGANIHSISDKETRPKRKNQKESAKFDRNFGGIDVDEDPRGIAGPSGLSDDFNIAYDQQPQQQVQYLEDLGDI</sequence>
<accession>Q9GS00</accession>
<dbReference type="EMBL" id="AL132895">
    <property type="protein sequence ID" value="CAC14399.1"/>
    <property type="molecule type" value="Genomic_DNA"/>
</dbReference>
<dbReference type="RefSeq" id="NP_001370106.1">
    <property type="nucleotide sequence ID" value="NM_001383483.2"/>
</dbReference>
<dbReference type="RefSeq" id="NP_507507.1">
    <property type="nucleotide sequence ID" value="NM_075106.4"/>
</dbReference>
<dbReference type="SMR" id="Q9GS00"/>
<dbReference type="BioGRID" id="45146">
    <property type="interactions" value="24"/>
</dbReference>
<dbReference type="ComplexPortal" id="CPX-3386">
    <property type="entry name" value="COP9 signalosome complex"/>
</dbReference>
<dbReference type="DIP" id="DIP-26112N"/>
<dbReference type="FunCoup" id="Q9GS00">
    <property type="interactions" value="2764"/>
</dbReference>
<dbReference type="IntAct" id="Q9GS00">
    <property type="interactions" value="6"/>
</dbReference>
<dbReference type="STRING" id="6239.Y59A8A.1.1"/>
<dbReference type="iPTMnet" id="Q9GS00"/>
<dbReference type="PaxDb" id="6239-Y59A8A.1"/>
<dbReference type="PeptideAtlas" id="Q9GS00"/>
<dbReference type="EnsemblMetazoa" id="Y59A8A.1.1">
    <property type="protein sequence ID" value="Y59A8A.1.1"/>
    <property type="gene ID" value="WBGene00000813"/>
</dbReference>
<dbReference type="GeneID" id="180168"/>
<dbReference type="UCSC" id="Y59A8A.1">
    <property type="organism name" value="c. elegans"/>
</dbReference>
<dbReference type="AGR" id="WB:WBGene00000813"/>
<dbReference type="WormBase" id="Y59A8A.1">
    <property type="protein sequence ID" value="CE26200"/>
    <property type="gene ID" value="WBGene00000813"/>
    <property type="gene designation" value="csn-1"/>
</dbReference>
<dbReference type="eggNOG" id="KOG0686">
    <property type="taxonomic scope" value="Eukaryota"/>
</dbReference>
<dbReference type="GeneTree" id="ENSGT00510000046608"/>
<dbReference type="HOGENOM" id="CLU_444991_0_0_1"/>
<dbReference type="InParanoid" id="Q9GS00"/>
<dbReference type="OMA" id="IYLQNWA"/>
<dbReference type="OrthoDB" id="422427at2759"/>
<dbReference type="PhylomeDB" id="Q9GS00"/>
<dbReference type="Reactome" id="R-CEL-5696394">
    <property type="pathway name" value="DNA Damage Recognition in GG-NER"/>
</dbReference>
<dbReference type="Reactome" id="R-CEL-6781823">
    <property type="pathway name" value="Formation of TC-NER Pre-Incision Complex"/>
</dbReference>
<dbReference type="Reactome" id="R-CEL-8856825">
    <property type="pathway name" value="Cargo recognition for clathrin-mediated endocytosis"/>
</dbReference>
<dbReference type="Reactome" id="R-CEL-8951664">
    <property type="pathway name" value="Neddylation"/>
</dbReference>
<dbReference type="PRO" id="PR:Q9GS00"/>
<dbReference type="Proteomes" id="UP000001940">
    <property type="component" value="Chromosome V"/>
</dbReference>
<dbReference type="Bgee" id="WBGene00000813">
    <property type="expression patterns" value="Expressed in germ line (C elegans) and 4 other cell types or tissues"/>
</dbReference>
<dbReference type="GO" id="GO:0008180">
    <property type="term" value="C:COP9 signalosome"/>
    <property type="evidence" value="ECO:0000353"/>
    <property type="project" value="ComplexPortal"/>
</dbReference>
<dbReference type="GO" id="GO:0005737">
    <property type="term" value="C:cytoplasm"/>
    <property type="evidence" value="ECO:0000303"/>
    <property type="project" value="ComplexPortal"/>
</dbReference>
<dbReference type="GO" id="GO:0005634">
    <property type="term" value="C:nucleus"/>
    <property type="evidence" value="ECO:0000303"/>
    <property type="project" value="ComplexPortal"/>
</dbReference>
<dbReference type="GO" id="GO:0060184">
    <property type="term" value="P:cell cycle switching"/>
    <property type="evidence" value="ECO:0000315"/>
    <property type="project" value="ComplexPortal"/>
</dbReference>
<dbReference type="GO" id="GO:0048477">
    <property type="term" value="P:oogenesis"/>
    <property type="evidence" value="ECO:0007669"/>
    <property type="project" value="UniProtKB-KW"/>
</dbReference>
<dbReference type="GO" id="GO:1905879">
    <property type="term" value="P:regulation of oogenesis"/>
    <property type="evidence" value="ECO:0000315"/>
    <property type="project" value="ComplexPortal"/>
</dbReference>
<dbReference type="Gene3D" id="1.25.40.570">
    <property type="match status" value="1"/>
</dbReference>
<dbReference type="InterPro" id="IPR000717">
    <property type="entry name" value="PCI_dom"/>
</dbReference>
<dbReference type="InterPro" id="IPR019585">
    <property type="entry name" value="Rpn7/CSN1"/>
</dbReference>
<dbReference type="InterPro" id="IPR045135">
    <property type="entry name" value="Rpn7_N"/>
</dbReference>
<dbReference type="InterPro" id="IPR036390">
    <property type="entry name" value="WH_DNA-bd_sf"/>
</dbReference>
<dbReference type="PANTHER" id="PTHR14145">
    <property type="entry name" value="26S PROTESOME SUBUNIT 6"/>
    <property type="match status" value="1"/>
</dbReference>
<dbReference type="PANTHER" id="PTHR14145:SF2">
    <property type="entry name" value="COP9 SIGNALOSOME COMPLEX SUBUNIT 1"/>
    <property type="match status" value="1"/>
</dbReference>
<dbReference type="Pfam" id="PF01399">
    <property type="entry name" value="PCI"/>
    <property type="match status" value="1"/>
</dbReference>
<dbReference type="Pfam" id="PF10602">
    <property type="entry name" value="RPN7"/>
    <property type="match status" value="1"/>
</dbReference>
<dbReference type="SMART" id="SM00088">
    <property type="entry name" value="PINT"/>
    <property type="match status" value="1"/>
</dbReference>
<dbReference type="SUPFAM" id="SSF46785">
    <property type="entry name" value="Winged helix' DNA-binding domain"/>
    <property type="match status" value="1"/>
</dbReference>
<dbReference type="PROSITE" id="PS50250">
    <property type="entry name" value="PCI"/>
    <property type="match status" value="1"/>
</dbReference>
<feature type="chain" id="PRO_0000120963" description="COP9 signalosome complex subunit 1">
    <location>
        <begin position="1"/>
        <end position="601"/>
    </location>
</feature>
<feature type="domain" description="PCI" evidence="1">
    <location>
        <begin position="338"/>
        <end position="500"/>
    </location>
</feature>
<feature type="region of interest" description="Disordered" evidence="2">
    <location>
        <begin position="1"/>
        <end position="54"/>
    </location>
</feature>
<feature type="region of interest" description="Disordered" evidence="2">
    <location>
        <begin position="268"/>
        <end position="294"/>
    </location>
</feature>
<feature type="region of interest" description="Disordered" evidence="2">
    <location>
        <begin position="535"/>
        <end position="581"/>
    </location>
</feature>
<feature type="compositionally biased region" description="Acidic residues" evidence="2">
    <location>
        <begin position="1"/>
        <end position="10"/>
    </location>
</feature>
<feature type="compositionally biased region" description="Low complexity" evidence="2">
    <location>
        <begin position="14"/>
        <end position="24"/>
    </location>
</feature>
<reference key="1">
    <citation type="journal article" date="1998" name="Science">
        <title>Genome sequence of the nematode C. elegans: a platform for investigating biology.</title>
        <authorList>
            <consortium name="The C. elegans sequencing consortium"/>
        </authorList>
    </citation>
    <scope>NUCLEOTIDE SEQUENCE [LARGE SCALE GENOMIC DNA]</scope>
    <source>
        <strain>Bristol N2</strain>
    </source>
</reference>
<reference key="2">
    <citation type="journal article" date="2003" name="Curr. Biol.">
        <title>Neddylation and deneddylation of CUL-3 is required to target MEI-1/katanin for degradation at the meiosis-to-mitosis transition in C. elegans.</title>
        <authorList>
            <person name="Pintard L."/>
            <person name="Kurz T."/>
            <person name="Glaser S."/>
            <person name="Willis J.H."/>
            <person name="Peter M."/>
            <person name="Bowerman B."/>
        </authorList>
    </citation>
    <scope>FUNCTION</scope>
    <scope>SUBCELLULAR LOCATION</scope>
    <scope>INTERACTION WITH CSN-2; CSN-4; CSN-5 AND RBX-1</scope>
</reference>
<keyword id="KW-0963">Cytoplasm</keyword>
<keyword id="KW-0217">Developmental protein</keyword>
<keyword id="KW-0221">Differentiation</keyword>
<keyword id="KW-0539">Nucleus</keyword>
<keyword id="KW-0896">Oogenesis</keyword>
<keyword id="KW-1185">Reference proteome</keyword>
<keyword id="KW-0736">Signalosome</keyword>
<gene>
    <name type="primary">csn-1</name>
    <name type="ORF">Y59A8A.1</name>
</gene>